<keyword id="KW-0963">Cytoplasm</keyword>
<keyword id="KW-0342">GTP-binding</keyword>
<keyword id="KW-0396">Initiation factor</keyword>
<keyword id="KW-0547">Nucleotide-binding</keyword>
<keyword id="KW-0648">Protein biosynthesis</keyword>
<evidence type="ECO:0000250" key="1"/>
<evidence type="ECO:0000255" key="2">
    <source>
        <dbReference type="HAMAP-Rule" id="MF_00100"/>
    </source>
</evidence>
<evidence type="ECO:0000256" key="3">
    <source>
        <dbReference type="SAM" id="MobiDB-lite"/>
    </source>
</evidence>
<comment type="function">
    <text evidence="2">One of the essential components for the initiation of protein synthesis. Protects formylmethionyl-tRNA from spontaneous hydrolysis and promotes its binding to the 30S ribosomal subunits. Also involved in the hydrolysis of GTP during the formation of the 70S ribosomal complex.</text>
</comment>
<comment type="subcellular location">
    <subcellularLocation>
        <location evidence="2">Cytoplasm</location>
    </subcellularLocation>
</comment>
<comment type="similarity">
    <text evidence="2">Belongs to the TRAFAC class translation factor GTPase superfamily. Classic translation factor GTPase family. IF-2 subfamily.</text>
</comment>
<reference key="1">
    <citation type="journal article" date="2008" name="PLoS ONE">
        <title>Genome biology of Actinobacillus pleuropneumoniae JL03, an isolate of serotype 3 prevalent in China.</title>
        <authorList>
            <person name="Xu Z."/>
            <person name="Zhou Y."/>
            <person name="Li L."/>
            <person name="Zhou R."/>
            <person name="Xiao S."/>
            <person name="Wan Y."/>
            <person name="Zhang S."/>
            <person name="Wang K."/>
            <person name="Li W."/>
            <person name="Li L."/>
            <person name="Jin H."/>
            <person name="Kang M."/>
            <person name="Dalai B."/>
            <person name="Li T."/>
            <person name="Liu L."/>
            <person name="Cheng Y."/>
            <person name="Zhang L."/>
            <person name="Xu T."/>
            <person name="Zheng H."/>
            <person name="Pu S."/>
            <person name="Wang B."/>
            <person name="Gu W."/>
            <person name="Zhang X.L."/>
            <person name="Zhu G.-F."/>
            <person name="Wang S."/>
            <person name="Zhao G.-P."/>
            <person name="Chen H."/>
        </authorList>
    </citation>
    <scope>NUCLEOTIDE SEQUENCE [LARGE SCALE GENOMIC DNA]</scope>
    <source>
        <strain>JL03</strain>
    </source>
</reference>
<name>IF2_ACTPJ</name>
<sequence length="841" mass="91485">MSDNEIKNEAPKKLSLQRRTKTTVADGKVQVEVRKSRKIDTAAVKKAQEEAALKAKQEAEAKAQAEKTAAEQAKAEAEAAKKAEGAKVEATKKSAPAVPVMPNSKPKAAAPKAEQPKQEKALDPEKEAKKKEEAELRRKQEELARQKAEMEAKRAAENARRLAEIAREEAAENGEEFEDDRFTSSYAREADRDNDRRSEANRGRGKGGVNKAKKGDREDKNERNADRRNQKDVKGKGKNAKKGSALQQAFTKPVQVNKADVVIGETITVAELANKMAVKATEIIKTMMKMGEMVTINQVIDQETAQLVAEEMGHKVILRNENELEDAVMEDRDVDAEKVTRAPVVTIMGHVDHGKTSLLDYIRKAKVAAGEAGGITQHIGAYHVETEDGKMITFLDTPGHAAFTSMRARGAKATDIVVLVVAADDGVMPQTIEAIQHARAAGAPIVVAVNKIDKPEANPDRVEQELLQHEVVSEKFGGDVQFVSVSAKKGLGIDDLLEAILLQSEVLELTAVKEGMASGVVIESYLDKGRGPVATILVQSGTLNKGDIVLCGFEYGRVRAMRDENGKEVDSAGPSIPVEVLGLSGVPAAGDEATVVRDEKKAREVALFRQGKFREVKLARQQKAKLENMFSNMTAGDVAELNVIVKADVQGSVEAICQSLAELSTDEVKVKVVGSGVGGITETDATLAAASNAIMVGFNVRADASARRVIEAENIDLRYYSIIYELLNEIKAAMSGMLQPEFKQEIIGLAEVRDVFRHPKFGAIAGCMVTEGVVKRNNPIRVLRDNVVIFEGELESLRRFKDDVSEVRNGMECGIGVKNYNDVKVGDQIEVFEVVEVKRSI</sequence>
<protein>
    <recommendedName>
        <fullName evidence="2">Translation initiation factor IF-2</fullName>
    </recommendedName>
</protein>
<proteinExistence type="inferred from homology"/>
<organism>
    <name type="scientific">Actinobacillus pleuropneumoniae serotype 3 (strain JL03)</name>
    <dbReference type="NCBI Taxonomy" id="434271"/>
    <lineage>
        <taxon>Bacteria</taxon>
        <taxon>Pseudomonadati</taxon>
        <taxon>Pseudomonadota</taxon>
        <taxon>Gammaproteobacteria</taxon>
        <taxon>Pasteurellales</taxon>
        <taxon>Pasteurellaceae</taxon>
        <taxon>Actinobacillus</taxon>
    </lineage>
</organism>
<feature type="chain" id="PRO_1000093753" description="Translation initiation factor IF-2">
    <location>
        <begin position="1"/>
        <end position="841"/>
    </location>
</feature>
<feature type="domain" description="tr-type G">
    <location>
        <begin position="340"/>
        <end position="510"/>
    </location>
</feature>
<feature type="region of interest" description="Disordered" evidence="3">
    <location>
        <begin position="1"/>
        <end position="24"/>
    </location>
</feature>
<feature type="region of interest" description="Disordered" evidence="3">
    <location>
        <begin position="50"/>
        <end position="246"/>
    </location>
</feature>
<feature type="region of interest" description="G1" evidence="1">
    <location>
        <begin position="349"/>
        <end position="356"/>
    </location>
</feature>
<feature type="region of interest" description="G2" evidence="1">
    <location>
        <begin position="374"/>
        <end position="378"/>
    </location>
</feature>
<feature type="region of interest" description="G3" evidence="1">
    <location>
        <begin position="396"/>
        <end position="399"/>
    </location>
</feature>
<feature type="region of interest" description="G4" evidence="1">
    <location>
        <begin position="450"/>
        <end position="453"/>
    </location>
</feature>
<feature type="region of interest" description="G5" evidence="1">
    <location>
        <begin position="486"/>
        <end position="488"/>
    </location>
</feature>
<feature type="compositionally biased region" description="Basic and acidic residues" evidence="3">
    <location>
        <begin position="1"/>
        <end position="12"/>
    </location>
</feature>
<feature type="compositionally biased region" description="Basic and acidic residues" evidence="3">
    <location>
        <begin position="50"/>
        <end position="92"/>
    </location>
</feature>
<feature type="compositionally biased region" description="Basic and acidic residues" evidence="3">
    <location>
        <begin position="114"/>
        <end position="170"/>
    </location>
</feature>
<feature type="compositionally biased region" description="Basic and acidic residues" evidence="3">
    <location>
        <begin position="188"/>
        <end position="202"/>
    </location>
</feature>
<feature type="compositionally biased region" description="Basic and acidic residues" evidence="3">
    <location>
        <begin position="213"/>
        <end position="235"/>
    </location>
</feature>
<feature type="binding site" evidence="2">
    <location>
        <begin position="349"/>
        <end position="356"/>
    </location>
    <ligand>
        <name>GTP</name>
        <dbReference type="ChEBI" id="CHEBI:37565"/>
    </ligand>
</feature>
<feature type="binding site" evidence="2">
    <location>
        <begin position="396"/>
        <end position="400"/>
    </location>
    <ligand>
        <name>GTP</name>
        <dbReference type="ChEBI" id="CHEBI:37565"/>
    </ligand>
</feature>
<feature type="binding site" evidence="2">
    <location>
        <begin position="450"/>
        <end position="453"/>
    </location>
    <ligand>
        <name>GTP</name>
        <dbReference type="ChEBI" id="CHEBI:37565"/>
    </ligand>
</feature>
<dbReference type="EMBL" id="CP000687">
    <property type="protein sequence ID" value="ABY69200.1"/>
    <property type="molecule type" value="Genomic_DNA"/>
</dbReference>
<dbReference type="RefSeq" id="WP_012262893.1">
    <property type="nucleotide sequence ID" value="NC_010278.1"/>
</dbReference>
<dbReference type="SMR" id="B0BNR5"/>
<dbReference type="KEGG" id="apj:APJL_0630"/>
<dbReference type="HOGENOM" id="CLU_006301_6_3_6"/>
<dbReference type="Proteomes" id="UP000008547">
    <property type="component" value="Chromosome"/>
</dbReference>
<dbReference type="GO" id="GO:0005829">
    <property type="term" value="C:cytosol"/>
    <property type="evidence" value="ECO:0007669"/>
    <property type="project" value="TreeGrafter"/>
</dbReference>
<dbReference type="GO" id="GO:0005525">
    <property type="term" value="F:GTP binding"/>
    <property type="evidence" value="ECO:0007669"/>
    <property type="project" value="UniProtKB-KW"/>
</dbReference>
<dbReference type="GO" id="GO:0003924">
    <property type="term" value="F:GTPase activity"/>
    <property type="evidence" value="ECO:0007669"/>
    <property type="project" value="UniProtKB-UniRule"/>
</dbReference>
<dbReference type="GO" id="GO:0097216">
    <property type="term" value="F:guanosine tetraphosphate binding"/>
    <property type="evidence" value="ECO:0007669"/>
    <property type="project" value="UniProtKB-ARBA"/>
</dbReference>
<dbReference type="GO" id="GO:0003743">
    <property type="term" value="F:translation initiation factor activity"/>
    <property type="evidence" value="ECO:0007669"/>
    <property type="project" value="UniProtKB-UniRule"/>
</dbReference>
<dbReference type="CDD" id="cd01887">
    <property type="entry name" value="IF2_eIF5B"/>
    <property type="match status" value="1"/>
</dbReference>
<dbReference type="CDD" id="cd03702">
    <property type="entry name" value="IF2_mtIF2_II"/>
    <property type="match status" value="1"/>
</dbReference>
<dbReference type="CDD" id="cd03692">
    <property type="entry name" value="mtIF2_IVc"/>
    <property type="match status" value="1"/>
</dbReference>
<dbReference type="FunFam" id="2.40.30.10:FF:000007">
    <property type="entry name" value="Translation initiation factor IF-2"/>
    <property type="match status" value="1"/>
</dbReference>
<dbReference type="FunFam" id="2.40.30.10:FF:000008">
    <property type="entry name" value="Translation initiation factor IF-2"/>
    <property type="match status" value="1"/>
</dbReference>
<dbReference type="FunFam" id="3.40.50.10050:FF:000001">
    <property type="entry name" value="Translation initiation factor IF-2"/>
    <property type="match status" value="1"/>
</dbReference>
<dbReference type="FunFam" id="3.40.50.300:FF:000019">
    <property type="entry name" value="Translation initiation factor IF-2"/>
    <property type="match status" value="1"/>
</dbReference>
<dbReference type="Gene3D" id="3.40.50.300">
    <property type="entry name" value="P-loop containing nucleotide triphosphate hydrolases"/>
    <property type="match status" value="1"/>
</dbReference>
<dbReference type="Gene3D" id="2.40.30.10">
    <property type="entry name" value="Translation factors"/>
    <property type="match status" value="2"/>
</dbReference>
<dbReference type="Gene3D" id="3.40.50.10050">
    <property type="entry name" value="Translation initiation factor IF- 2, domain 3"/>
    <property type="match status" value="1"/>
</dbReference>
<dbReference type="HAMAP" id="MF_00100_B">
    <property type="entry name" value="IF_2_B"/>
    <property type="match status" value="1"/>
</dbReference>
<dbReference type="InterPro" id="IPR053905">
    <property type="entry name" value="EF-G-like_DII"/>
</dbReference>
<dbReference type="InterPro" id="IPR004161">
    <property type="entry name" value="EFTu-like_2"/>
</dbReference>
<dbReference type="InterPro" id="IPR044145">
    <property type="entry name" value="IF2_II"/>
</dbReference>
<dbReference type="InterPro" id="IPR006847">
    <property type="entry name" value="IF2_N"/>
</dbReference>
<dbReference type="InterPro" id="IPR027417">
    <property type="entry name" value="P-loop_NTPase"/>
</dbReference>
<dbReference type="InterPro" id="IPR005225">
    <property type="entry name" value="Small_GTP-bd"/>
</dbReference>
<dbReference type="InterPro" id="IPR000795">
    <property type="entry name" value="T_Tr_GTP-bd_dom"/>
</dbReference>
<dbReference type="InterPro" id="IPR000178">
    <property type="entry name" value="TF_IF2_bacterial-like"/>
</dbReference>
<dbReference type="InterPro" id="IPR015760">
    <property type="entry name" value="TIF_IF2"/>
</dbReference>
<dbReference type="InterPro" id="IPR023115">
    <property type="entry name" value="TIF_IF2_dom3"/>
</dbReference>
<dbReference type="InterPro" id="IPR036925">
    <property type="entry name" value="TIF_IF2_dom3_sf"/>
</dbReference>
<dbReference type="InterPro" id="IPR009000">
    <property type="entry name" value="Transl_B-barrel_sf"/>
</dbReference>
<dbReference type="NCBIfam" id="TIGR00487">
    <property type="entry name" value="IF-2"/>
    <property type="match status" value="1"/>
</dbReference>
<dbReference type="NCBIfam" id="TIGR00231">
    <property type="entry name" value="small_GTP"/>
    <property type="match status" value="1"/>
</dbReference>
<dbReference type="PANTHER" id="PTHR43381:SF5">
    <property type="entry name" value="TR-TYPE G DOMAIN-CONTAINING PROTEIN"/>
    <property type="match status" value="1"/>
</dbReference>
<dbReference type="PANTHER" id="PTHR43381">
    <property type="entry name" value="TRANSLATION INITIATION FACTOR IF-2-RELATED"/>
    <property type="match status" value="1"/>
</dbReference>
<dbReference type="Pfam" id="PF22042">
    <property type="entry name" value="EF-G_D2"/>
    <property type="match status" value="1"/>
</dbReference>
<dbReference type="Pfam" id="PF00009">
    <property type="entry name" value="GTP_EFTU"/>
    <property type="match status" value="1"/>
</dbReference>
<dbReference type="Pfam" id="PF03144">
    <property type="entry name" value="GTP_EFTU_D2"/>
    <property type="match status" value="1"/>
</dbReference>
<dbReference type="Pfam" id="PF11987">
    <property type="entry name" value="IF-2"/>
    <property type="match status" value="1"/>
</dbReference>
<dbReference type="Pfam" id="PF04760">
    <property type="entry name" value="IF2_N"/>
    <property type="match status" value="1"/>
</dbReference>
<dbReference type="SUPFAM" id="SSF52156">
    <property type="entry name" value="Initiation factor IF2/eIF5b, domain 3"/>
    <property type="match status" value="1"/>
</dbReference>
<dbReference type="SUPFAM" id="SSF52540">
    <property type="entry name" value="P-loop containing nucleoside triphosphate hydrolases"/>
    <property type="match status" value="1"/>
</dbReference>
<dbReference type="SUPFAM" id="SSF50447">
    <property type="entry name" value="Translation proteins"/>
    <property type="match status" value="2"/>
</dbReference>
<dbReference type="PROSITE" id="PS51722">
    <property type="entry name" value="G_TR_2"/>
    <property type="match status" value="1"/>
</dbReference>
<dbReference type="PROSITE" id="PS01176">
    <property type="entry name" value="IF2"/>
    <property type="match status" value="1"/>
</dbReference>
<gene>
    <name evidence="2" type="primary">infB</name>
    <name type="ordered locus">APJL_0630</name>
</gene>
<accession>B0BNR5</accession>